<keyword id="KW-0067">ATP-binding</keyword>
<keyword id="KW-0436">Ligase</keyword>
<keyword id="KW-0547">Nucleotide-binding</keyword>
<keyword id="KW-0658">Purine biosynthesis</keyword>
<keyword id="KW-1185">Reference proteome</keyword>
<proteinExistence type="inferred from homology"/>
<gene>
    <name evidence="1" type="primary">purC</name>
    <name type="ordered locus">DR_0226</name>
</gene>
<accession>Q9RXT0</accession>
<evidence type="ECO:0000255" key="1">
    <source>
        <dbReference type="HAMAP-Rule" id="MF_00137"/>
    </source>
</evidence>
<evidence type="ECO:0000305" key="2"/>
<reference key="1">
    <citation type="journal article" date="1999" name="Science">
        <title>Genome sequence of the radioresistant bacterium Deinococcus radiodurans R1.</title>
        <authorList>
            <person name="White O."/>
            <person name="Eisen J.A."/>
            <person name="Heidelberg J.F."/>
            <person name="Hickey E.K."/>
            <person name="Peterson J.D."/>
            <person name="Dodson R.J."/>
            <person name="Haft D.H."/>
            <person name="Gwinn M.L."/>
            <person name="Nelson W.C."/>
            <person name="Richardson D.L."/>
            <person name="Moffat K.S."/>
            <person name="Qin H."/>
            <person name="Jiang L."/>
            <person name="Pamphile W."/>
            <person name="Crosby M."/>
            <person name="Shen M."/>
            <person name="Vamathevan J.J."/>
            <person name="Lam P."/>
            <person name="McDonald L.A."/>
            <person name="Utterback T.R."/>
            <person name="Zalewski C."/>
            <person name="Makarova K.S."/>
            <person name="Aravind L."/>
            <person name="Daly M.J."/>
            <person name="Minton K.W."/>
            <person name="Fleischmann R.D."/>
            <person name="Ketchum K.A."/>
            <person name="Nelson K.E."/>
            <person name="Salzberg S.L."/>
            <person name="Smith H.O."/>
            <person name="Venter J.C."/>
            <person name="Fraser C.M."/>
        </authorList>
    </citation>
    <scope>NUCLEOTIDE SEQUENCE [LARGE SCALE GENOMIC DNA]</scope>
    <source>
        <strain>ATCC 13939 / DSM 20539 / JCM 16871 / CCUG 27074 / LMG 4051 / NBRC 15346 / NCIMB 9279 / VKM B-1422 / R1</strain>
    </source>
</reference>
<dbReference type="EC" id="6.3.2.6" evidence="1"/>
<dbReference type="EMBL" id="AE000513">
    <property type="protein sequence ID" value="AAF09811.1"/>
    <property type="status" value="ALT_INIT"/>
    <property type="molecule type" value="Genomic_DNA"/>
</dbReference>
<dbReference type="PIR" id="G75545">
    <property type="entry name" value="G75545"/>
</dbReference>
<dbReference type="RefSeq" id="NP_293950.1">
    <property type="nucleotide sequence ID" value="NC_001263.1"/>
</dbReference>
<dbReference type="RefSeq" id="WP_027480166.1">
    <property type="nucleotide sequence ID" value="NC_001263.1"/>
</dbReference>
<dbReference type="SMR" id="Q9RXT0"/>
<dbReference type="FunCoup" id="Q9RXT0">
    <property type="interactions" value="423"/>
</dbReference>
<dbReference type="STRING" id="243230.DR_0226"/>
<dbReference type="PaxDb" id="243230-DR_0226"/>
<dbReference type="EnsemblBacteria" id="AAF09811">
    <property type="protein sequence ID" value="AAF09811"/>
    <property type="gene ID" value="DR_0226"/>
</dbReference>
<dbReference type="GeneID" id="69516457"/>
<dbReference type="KEGG" id="dra:DR_0226"/>
<dbReference type="PATRIC" id="fig|243230.17.peg.389"/>
<dbReference type="eggNOG" id="COG0152">
    <property type="taxonomic scope" value="Bacteria"/>
</dbReference>
<dbReference type="HOGENOM" id="CLU_061495_2_0_0"/>
<dbReference type="InParanoid" id="Q9RXT0"/>
<dbReference type="OrthoDB" id="9801549at2"/>
<dbReference type="UniPathway" id="UPA00074">
    <property type="reaction ID" value="UER00131"/>
</dbReference>
<dbReference type="Proteomes" id="UP000002524">
    <property type="component" value="Chromosome 1"/>
</dbReference>
<dbReference type="GO" id="GO:0005524">
    <property type="term" value="F:ATP binding"/>
    <property type="evidence" value="ECO:0007669"/>
    <property type="project" value="UniProtKB-KW"/>
</dbReference>
<dbReference type="GO" id="GO:0004639">
    <property type="term" value="F:phosphoribosylaminoimidazolesuccinocarboxamide synthase activity"/>
    <property type="evidence" value="ECO:0007669"/>
    <property type="project" value="UniProtKB-UniRule"/>
</dbReference>
<dbReference type="GO" id="GO:0006189">
    <property type="term" value="P:'de novo' IMP biosynthetic process"/>
    <property type="evidence" value="ECO:0007669"/>
    <property type="project" value="UniProtKB-UniRule"/>
</dbReference>
<dbReference type="GO" id="GO:0009236">
    <property type="term" value="P:cobalamin biosynthetic process"/>
    <property type="evidence" value="ECO:0007669"/>
    <property type="project" value="InterPro"/>
</dbReference>
<dbReference type="CDD" id="cd01415">
    <property type="entry name" value="SAICAR_synt_PurC"/>
    <property type="match status" value="1"/>
</dbReference>
<dbReference type="FunFam" id="3.30.470.20:FF:000006">
    <property type="entry name" value="Phosphoribosylaminoimidazole-succinocarboxamide synthase"/>
    <property type="match status" value="1"/>
</dbReference>
<dbReference type="Gene3D" id="3.30.470.20">
    <property type="entry name" value="ATP-grasp fold, B domain"/>
    <property type="match status" value="1"/>
</dbReference>
<dbReference type="Gene3D" id="3.30.200.20">
    <property type="entry name" value="Phosphorylase Kinase, domain 1"/>
    <property type="match status" value="1"/>
</dbReference>
<dbReference type="HAMAP" id="MF_00137">
    <property type="entry name" value="SAICAR_synth"/>
    <property type="match status" value="1"/>
</dbReference>
<dbReference type="InterPro" id="IPR028923">
    <property type="entry name" value="SAICAR_synt/ADE2_N"/>
</dbReference>
<dbReference type="InterPro" id="IPR033934">
    <property type="entry name" value="SAICAR_synt_PurC"/>
</dbReference>
<dbReference type="InterPro" id="IPR001636">
    <property type="entry name" value="SAICAR_synth"/>
</dbReference>
<dbReference type="InterPro" id="IPR050089">
    <property type="entry name" value="SAICAR_synthetase"/>
</dbReference>
<dbReference type="InterPro" id="IPR018236">
    <property type="entry name" value="SAICAR_synthetase_CS"/>
</dbReference>
<dbReference type="NCBIfam" id="TIGR00081">
    <property type="entry name" value="purC"/>
    <property type="match status" value="1"/>
</dbReference>
<dbReference type="PANTHER" id="PTHR43599">
    <property type="entry name" value="MULTIFUNCTIONAL PROTEIN ADE2"/>
    <property type="match status" value="1"/>
</dbReference>
<dbReference type="PANTHER" id="PTHR43599:SF3">
    <property type="entry name" value="SI:DKEY-6E2.2"/>
    <property type="match status" value="1"/>
</dbReference>
<dbReference type="Pfam" id="PF01259">
    <property type="entry name" value="SAICAR_synt"/>
    <property type="match status" value="1"/>
</dbReference>
<dbReference type="SUPFAM" id="SSF56104">
    <property type="entry name" value="SAICAR synthase-like"/>
    <property type="match status" value="1"/>
</dbReference>
<dbReference type="PROSITE" id="PS01057">
    <property type="entry name" value="SAICAR_SYNTHETASE_1"/>
    <property type="match status" value="1"/>
</dbReference>
<dbReference type="PROSITE" id="PS01058">
    <property type="entry name" value="SAICAR_SYNTHETASE_2"/>
    <property type="match status" value="1"/>
</dbReference>
<organism>
    <name type="scientific">Deinococcus radiodurans (strain ATCC 13939 / DSM 20539 / JCM 16871 / CCUG 27074 / LMG 4051 / NBRC 15346 / NCIMB 9279 / VKM B-1422 / R1)</name>
    <dbReference type="NCBI Taxonomy" id="243230"/>
    <lineage>
        <taxon>Bacteria</taxon>
        <taxon>Thermotogati</taxon>
        <taxon>Deinococcota</taxon>
        <taxon>Deinococci</taxon>
        <taxon>Deinococcales</taxon>
        <taxon>Deinococcaceae</taxon>
        <taxon>Deinococcus</taxon>
    </lineage>
</organism>
<name>PUR7_DEIRA</name>
<feature type="chain" id="PRO_0000100824" description="Phosphoribosylaminoimidazole-succinocarboxamide synthase">
    <location>
        <begin position="1"/>
        <end position="237"/>
    </location>
</feature>
<protein>
    <recommendedName>
        <fullName evidence="1">Phosphoribosylaminoimidazole-succinocarboxamide synthase</fullName>
        <ecNumber evidence="1">6.3.2.6</ecNumber>
    </recommendedName>
    <alternativeName>
        <fullName evidence="1">SAICAR synthetase</fullName>
    </alternativeName>
</protein>
<comment type="catalytic activity">
    <reaction evidence="1">
        <text>5-amino-1-(5-phospho-D-ribosyl)imidazole-4-carboxylate + L-aspartate + ATP = (2S)-2-[5-amino-1-(5-phospho-beta-D-ribosyl)imidazole-4-carboxamido]succinate + ADP + phosphate + 2 H(+)</text>
        <dbReference type="Rhea" id="RHEA:22628"/>
        <dbReference type="ChEBI" id="CHEBI:15378"/>
        <dbReference type="ChEBI" id="CHEBI:29991"/>
        <dbReference type="ChEBI" id="CHEBI:30616"/>
        <dbReference type="ChEBI" id="CHEBI:43474"/>
        <dbReference type="ChEBI" id="CHEBI:58443"/>
        <dbReference type="ChEBI" id="CHEBI:77657"/>
        <dbReference type="ChEBI" id="CHEBI:456216"/>
        <dbReference type="EC" id="6.3.2.6"/>
    </reaction>
</comment>
<comment type="pathway">
    <text evidence="1">Purine metabolism; IMP biosynthesis via de novo pathway; 5-amino-1-(5-phospho-D-ribosyl)imidazole-4-carboxamide from 5-amino-1-(5-phospho-D-ribosyl)imidazole-4-carboxylate: step 1/2.</text>
</comment>
<comment type="similarity">
    <text evidence="1">Belongs to the SAICAR synthetase family.</text>
</comment>
<comment type="sequence caution" evidence="2">
    <conflict type="erroneous initiation">
        <sequence resource="EMBL-CDS" id="AAF09811"/>
    </conflict>
</comment>
<sequence length="237" mass="26815">MTRGEMKYEGKAKRVYATENPHEYVVEYKDDATAFNAQKRGEWAGKGATNNAITAHLYPQLEAAGIPTHFLEKLSDREQRVKAVTIVPVEVIVRNVAAGSFSKRLGVEEGTPLPRPVVEYCYKSDALGDPLINTDTAVALGWASEDDLKRIRELALQIRDFLVPYFEKRGVRLIDFKLEFGKLPSGEIVLADEISPDTCRFWDAETNEKMDKDRFRRDLGGEAEAYAEMLKRVTREV</sequence>